<sequence>MAGRSGDSEEELLKTVRLIKFLYQSNPPPKPEGTRQARRNRRRRWRERQRQIRSISGWILSNYLGRLAEPVPLQLPPLERLTLDCNEDCGTSGTQGVGSPQILVESPTVLESGTKE</sequence>
<dbReference type="EMBL" id="M17450">
    <property type="protein sequence ID" value="AAA45061.1"/>
    <property type="molecule type" value="Genomic_RNA"/>
</dbReference>
<dbReference type="SMR" id="P05872"/>
<dbReference type="GO" id="GO:0030430">
    <property type="term" value="C:host cell cytoplasm"/>
    <property type="evidence" value="ECO:0007669"/>
    <property type="project" value="UniProtKB-SubCell"/>
</dbReference>
<dbReference type="GO" id="GO:0044196">
    <property type="term" value="C:host cell nucleolus"/>
    <property type="evidence" value="ECO:0007669"/>
    <property type="project" value="UniProtKB-SubCell"/>
</dbReference>
<dbReference type="GO" id="GO:0003700">
    <property type="term" value="F:DNA-binding transcription factor activity"/>
    <property type="evidence" value="ECO:0007669"/>
    <property type="project" value="UniProtKB-UniRule"/>
</dbReference>
<dbReference type="GO" id="GO:0003723">
    <property type="term" value="F:RNA binding"/>
    <property type="evidence" value="ECO:0007669"/>
    <property type="project" value="UniProtKB-UniRule"/>
</dbReference>
<dbReference type="GO" id="GO:0051028">
    <property type="term" value="P:mRNA transport"/>
    <property type="evidence" value="ECO:0007669"/>
    <property type="project" value="UniProtKB-UniRule"/>
</dbReference>
<dbReference type="GO" id="GO:0016032">
    <property type="term" value="P:viral process"/>
    <property type="evidence" value="ECO:0007669"/>
    <property type="project" value="UniProtKB-UniRule"/>
</dbReference>
<dbReference type="Gene3D" id="6.10.140.630">
    <property type="match status" value="1"/>
</dbReference>
<dbReference type="HAMAP" id="MF_04077">
    <property type="entry name" value="REV_HIV1"/>
    <property type="match status" value="1"/>
</dbReference>
<dbReference type="InterPro" id="IPR000625">
    <property type="entry name" value="REV_protein"/>
</dbReference>
<dbReference type="Pfam" id="PF00424">
    <property type="entry name" value="REV"/>
    <property type="match status" value="1"/>
</dbReference>
<organism>
    <name type="scientific">Human immunodeficiency virus type 1 group M subtype B (isolate SC)</name>
    <name type="common">HIV-1</name>
    <dbReference type="NCBI Taxonomy" id="11702"/>
    <lineage>
        <taxon>Viruses</taxon>
        <taxon>Riboviria</taxon>
        <taxon>Pararnavirae</taxon>
        <taxon>Artverviricota</taxon>
        <taxon>Revtraviricetes</taxon>
        <taxon>Ortervirales</taxon>
        <taxon>Retroviridae</taxon>
        <taxon>Orthoretrovirinae</taxon>
        <taxon>Lentivirus</taxon>
        <taxon>Human immunodeficiency virus type 1</taxon>
    </lineage>
</organism>
<proteinExistence type="inferred from homology"/>
<comment type="function">
    <text evidence="1">Escorts unspliced or incompletely spliced viral pre-mRNAs (late transcripts) out of the nucleus of infected cells. These pre-mRNAs carry a recognition sequence called Rev responsive element (RRE) located in the env gene, that is not present in fully spliced viral mRNAs (early transcripts). This function is essential since most viral proteins are translated from unspliced or partially spliced pre-mRNAs which cannot exit the nucleus by the pathway used by fully processed cellular mRNAs. Rev itself is translated from a fully spliced mRNA that readily exits the nucleus. Rev's nuclear localization signal (NLS) binds directly to KPNB1/Importin beta-1 without previous binding to KPNA1/Importin alpha-1. KPNB1 binds to the GDP bound form of RAN (Ran-GDP) and targets Rev to the nucleus. In the nucleus, the conversion from Ran-GDP to Ran-GTP dissociates Rev from KPNB1 and allows Rev's binding to the RRE in viral pre-mRNAs. Rev multimerization on the RRE via cooperative assembly exposes its nuclear export signal (NES) to the surface. Rev can then form a complex with XPO1/CRM1 and Ran-GTP, leading to nuclear export of the complex. Conversion from Ran-GTP to Ran-GDP mediates dissociation of the Rev/RRE/XPO1/RAN complex, so that Rev can return to the nucleus for a subsequent round of export. Beside KPNB1, also seems to interact with TNPO1/Transportin-1, RANBP5/IPO5 and IPO7/RANBP7 for nuclear import. The nucleoporin-like HRB/RIP is an essential cofactor that probably indirectly interacts with Rev to release HIV RNAs from the perinuclear region to the cytoplasm.</text>
</comment>
<comment type="subunit">
    <text evidence="1">Homomultimer; when bound to the RRE. Multimeric assembly is essential for activity and may involve XPO1. Binds to human KPNB1, XPO1, TNPO1, RANBP5 and IPO7. Interacts with the viral Integrase. Interacts with human KHDRBS1. Interacts with human NAP1; this interaction decreases Rev multimerization and stimulates its activity. Interacts with human DEAD-box helicases DDX3 and DDX24; these interactions may serve for viral RNA export to the cytoplasm and packaging, respectively. Interacts with human PSIP1; this interaction may inhibit HIV-1 DNA integration by promoting dissociation of the Integrase-LEDGF/p75 complex.</text>
</comment>
<comment type="subcellular location">
    <subcellularLocation>
        <location evidence="1">Host nucleus</location>
        <location evidence="1">Host nucleolus</location>
    </subcellularLocation>
    <subcellularLocation>
        <location evidence="1">Host cytoplasm</location>
    </subcellularLocation>
    <text evidence="1">The presence of both nuclear import and nuclear export signals leads to continuous shuttling between the nucleus and cytoplasm.</text>
</comment>
<comment type="domain">
    <text evidence="1">The RNA-binding motif binds to the RRE, a 240 bp stem-and-loop structure present in incompletely spliced viral pre-mRNAs. This region also contains the NLS which mediates nuclear localization via KPNB1 binding and, when the N-terminal sequence is present, nucleolar targeting. These overlapping functions prevent Rev bound to RRE from undesirable return to the nucleus. When Rev binds the RRE, the NLS becomes masked while the NES remains accessible. The leucine-rich NES mediates binding to human XPO1.</text>
</comment>
<comment type="PTM">
    <text evidence="1">Asymmetrically arginine dimethylated at one site by host PRMT6. Methylation impairs the RNA-binding activity and export of viral RNA from the nucleus to the cytoplasm.</text>
</comment>
<comment type="PTM">
    <text evidence="1">Phosphorylated by protein kinase CK2. Presence of, and maybe binding to the N-terminus of the regulatory beta subunit of CK2 is necessary for CK2-mediated Rev's phosphorylation.</text>
</comment>
<comment type="miscellaneous">
    <text>The SC isolate was taken from an ARC patient in 1984 in Southern California.</text>
</comment>
<comment type="miscellaneous">
    <text evidence="1">HIV-1 lineages are divided in three main groups, M (for Major), O (for Outlier), and N (for New, or Non-M, Non-O). The vast majority of strains found worldwide belong to the group M. Group O seems to be endemic to and largely confined to Cameroon and neighboring countries in West Central Africa, where these viruses represent a small minority of HIV-1 strains. The group N is represented by a limited number of isolates from Cameroonian persons. The group M is further subdivided in 9 clades or subtypes (A to D, F to H, J and K).</text>
</comment>
<comment type="similarity">
    <text evidence="1">Belongs to the HIV-1 REV protein family.</text>
</comment>
<gene>
    <name evidence="1" type="primary">rev</name>
</gene>
<reference key="1">
    <citation type="journal article" date="1988" name="Virology">
        <title>Envelope sequences of two new United States HIV-1 isolates.</title>
        <authorList>
            <person name="Gurgo C."/>
            <person name="Guo H.-G."/>
            <person name="Franchini G."/>
            <person name="Aldovini A."/>
            <person name="Collalti E."/>
            <person name="Farrell K."/>
            <person name="Wong-Staal F."/>
            <person name="Gallo R.C."/>
            <person name="Reitz M.S. Jr."/>
        </authorList>
    </citation>
    <scope>NUCLEOTIDE SEQUENCE [GENOMIC RNA]</scope>
</reference>
<reference key="2">
    <citation type="journal article" date="1999" name="Arch. Biochem. Biophys.">
        <title>The ins and outs of HIV Rev.</title>
        <authorList>
            <person name="Hope T.J."/>
        </authorList>
    </citation>
    <scope>REVIEW</scope>
</reference>
<evidence type="ECO:0000255" key="1">
    <source>
        <dbReference type="HAMAP-Rule" id="MF_04077"/>
    </source>
</evidence>
<evidence type="ECO:0000256" key="2">
    <source>
        <dbReference type="SAM" id="MobiDB-lite"/>
    </source>
</evidence>
<protein>
    <recommendedName>
        <fullName evidence="1">Protein Rev</fullName>
    </recommendedName>
    <alternativeName>
        <fullName evidence="1">ART/TRS</fullName>
    </alternativeName>
    <alternativeName>
        <fullName evidence="1">Anti-repression transactivator</fullName>
    </alternativeName>
    <alternativeName>
        <fullName evidence="1">Regulator of expression of viral proteins</fullName>
    </alternativeName>
</protein>
<name>REV_HV1SC</name>
<accession>P05872</accession>
<keyword id="KW-0014">AIDS</keyword>
<keyword id="KW-1035">Host cytoplasm</keyword>
<keyword id="KW-1048">Host nucleus</keyword>
<keyword id="KW-0945">Host-virus interaction</keyword>
<keyword id="KW-0488">Methylation</keyword>
<keyword id="KW-0509">mRNA transport</keyword>
<keyword id="KW-0597">Phosphoprotein</keyword>
<keyword id="KW-0694">RNA-binding</keyword>
<keyword id="KW-0813">Transport</keyword>
<feature type="chain" id="PRO_0000085276" description="Protein Rev">
    <location>
        <begin position="1"/>
        <end position="116"/>
    </location>
</feature>
<feature type="region of interest" description="Homomultimerization" evidence="1">
    <location>
        <begin position="18"/>
        <end position="26"/>
    </location>
</feature>
<feature type="region of interest" description="Disordered" evidence="2">
    <location>
        <begin position="23"/>
        <end position="48"/>
    </location>
</feature>
<feature type="region of interest" description="Disordered" evidence="2">
    <location>
        <begin position="92"/>
        <end position="116"/>
    </location>
</feature>
<feature type="short sequence motif" description="Nuclear localization signal and RNA-binding (RRE)" evidence="1">
    <location>
        <begin position="34"/>
        <end position="50"/>
    </location>
</feature>
<feature type="short sequence motif" description="Nuclear export signal and binding to XPO1" evidence="1">
    <location>
        <begin position="73"/>
        <end position="84"/>
    </location>
</feature>
<feature type="compositionally biased region" description="Basic residues" evidence="2">
    <location>
        <begin position="36"/>
        <end position="47"/>
    </location>
</feature>
<feature type="modified residue" description="Phosphoserine; by host CK2" evidence="1">
    <location>
        <position position="5"/>
    </location>
</feature>
<feature type="modified residue" description="Phosphoserine; by host CK2" evidence="1">
    <location>
        <position position="8"/>
    </location>
</feature>
<feature type="modified residue" description="Phosphoserine; by host" evidence="1">
    <location>
        <position position="92"/>
    </location>
</feature>
<feature type="modified residue" description="Phosphoserine; by host" evidence="1">
    <location>
        <position position="99"/>
    </location>
</feature>
<organismHost>
    <name type="scientific">Homo sapiens</name>
    <name type="common">Human</name>
    <dbReference type="NCBI Taxonomy" id="9606"/>
</organismHost>